<feature type="chain" id="PRO_1000206038" description="Phosphoribosylformylglycinamidine synthase subunit PurL">
    <location>
        <begin position="1"/>
        <end position="765"/>
    </location>
</feature>
<feature type="active site" evidence="1">
    <location>
        <position position="57"/>
    </location>
</feature>
<feature type="active site" description="Proton acceptor" evidence="1">
    <location>
        <position position="108"/>
    </location>
</feature>
<feature type="binding site" evidence="1">
    <location>
        <position position="60"/>
    </location>
    <ligand>
        <name>ATP</name>
        <dbReference type="ChEBI" id="CHEBI:30616"/>
    </ligand>
</feature>
<feature type="binding site" evidence="1">
    <location>
        <position position="104"/>
    </location>
    <ligand>
        <name>ATP</name>
        <dbReference type="ChEBI" id="CHEBI:30616"/>
    </ligand>
</feature>
<feature type="binding site" evidence="1">
    <location>
        <position position="106"/>
    </location>
    <ligand>
        <name>Mg(2+)</name>
        <dbReference type="ChEBI" id="CHEBI:18420"/>
        <label>1</label>
    </ligand>
</feature>
<feature type="binding site" evidence="1">
    <location>
        <begin position="107"/>
        <end position="110"/>
    </location>
    <ligand>
        <name>substrate</name>
    </ligand>
</feature>
<feature type="binding site" evidence="1">
    <location>
        <position position="129"/>
    </location>
    <ligand>
        <name>substrate</name>
    </ligand>
</feature>
<feature type="binding site" evidence="1">
    <location>
        <position position="130"/>
    </location>
    <ligand>
        <name>Mg(2+)</name>
        <dbReference type="ChEBI" id="CHEBI:18420"/>
        <label>2</label>
    </ligand>
</feature>
<feature type="binding site" evidence="1">
    <location>
        <position position="254"/>
    </location>
    <ligand>
        <name>substrate</name>
    </ligand>
</feature>
<feature type="binding site" evidence="1">
    <location>
        <position position="282"/>
    </location>
    <ligand>
        <name>Mg(2+)</name>
        <dbReference type="ChEBI" id="CHEBI:18420"/>
        <label>2</label>
    </ligand>
</feature>
<feature type="binding site" evidence="1">
    <location>
        <begin position="326"/>
        <end position="328"/>
    </location>
    <ligand>
        <name>substrate</name>
    </ligand>
</feature>
<feature type="binding site" evidence="1">
    <location>
        <position position="508"/>
    </location>
    <ligand>
        <name>ATP</name>
        <dbReference type="ChEBI" id="CHEBI:30616"/>
    </ligand>
</feature>
<feature type="binding site" evidence="1">
    <location>
        <position position="545"/>
    </location>
    <ligand>
        <name>ATP</name>
        <dbReference type="ChEBI" id="CHEBI:30616"/>
    </ligand>
</feature>
<feature type="binding site" evidence="1">
    <location>
        <position position="546"/>
    </location>
    <ligand>
        <name>Mg(2+)</name>
        <dbReference type="ChEBI" id="CHEBI:18420"/>
        <label>1</label>
    </ligand>
</feature>
<feature type="binding site" evidence="1">
    <location>
        <position position="548"/>
    </location>
    <ligand>
        <name>substrate</name>
    </ligand>
</feature>
<keyword id="KW-0067">ATP-binding</keyword>
<keyword id="KW-0963">Cytoplasm</keyword>
<keyword id="KW-0436">Ligase</keyword>
<keyword id="KW-0460">Magnesium</keyword>
<keyword id="KW-0479">Metal-binding</keyword>
<keyword id="KW-0547">Nucleotide-binding</keyword>
<keyword id="KW-0658">Purine biosynthesis</keyword>
<keyword id="KW-1185">Reference proteome</keyword>
<name>PURL_CORA7</name>
<gene>
    <name evidence="1" type="primary">purL</name>
    <name type="ordered locus">cauri_2178</name>
</gene>
<protein>
    <recommendedName>
        <fullName evidence="1">Phosphoribosylformylglycinamidine synthase subunit PurL</fullName>
        <shortName evidence="1">FGAM synthase</shortName>
        <ecNumber evidence="1">6.3.5.3</ecNumber>
    </recommendedName>
    <alternativeName>
        <fullName evidence="1">Formylglycinamide ribonucleotide amidotransferase subunit II</fullName>
        <shortName evidence="1">FGAR amidotransferase II</shortName>
        <shortName evidence="1">FGAR-AT II</shortName>
    </alternativeName>
    <alternativeName>
        <fullName evidence="1">Glutamine amidotransferase PurL</fullName>
    </alternativeName>
    <alternativeName>
        <fullName evidence="1">Phosphoribosylformylglycinamidine synthase subunit II</fullName>
    </alternativeName>
</protein>
<evidence type="ECO:0000255" key="1">
    <source>
        <dbReference type="HAMAP-Rule" id="MF_00420"/>
    </source>
</evidence>
<comment type="function">
    <text evidence="1">Part of the phosphoribosylformylglycinamidine synthase complex involved in the purines biosynthetic pathway. Catalyzes the ATP-dependent conversion of formylglycinamide ribonucleotide (FGAR) and glutamine to yield formylglycinamidine ribonucleotide (FGAM) and glutamate. The FGAM synthase complex is composed of three subunits. PurQ produces an ammonia molecule by converting glutamine to glutamate. PurL transfers the ammonia molecule to FGAR to form FGAM in an ATP-dependent manner. PurS interacts with PurQ and PurL and is thought to assist in the transfer of the ammonia molecule from PurQ to PurL.</text>
</comment>
<comment type="catalytic activity">
    <reaction evidence="1">
        <text>N(2)-formyl-N(1)-(5-phospho-beta-D-ribosyl)glycinamide + L-glutamine + ATP + H2O = 2-formamido-N(1)-(5-O-phospho-beta-D-ribosyl)acetamidine + L-glutamate + ADP + phosphate + H(+)</text>
        <dbReference type="Rhea" id="RHEA:17129"/>
        <dbReference type="ChEBI" id="CHEBI:15377"/>
        <dbReference type="ChEBI" id="CHEBI:15378"/>
        <dbReference type="ChEBI" id="CHEBI:29985"/>
        <dbReference type="ChEBI" id="CHEBI:30616"/>
        <dbReference type="ChEBI" id="CHEBI:43474"/>
        <dbReference type="ChEBI" id="CHEBI:58359"/>
        <dbReference type="ChEBI" id="CHEBI:147286"/>
        <dbReference type="ChEBI" id="CHEBI:147287"/>
        <dbReference type="ChEBI" id="CHEBI:456216"/>
        <dbReference type="EC" id="6.3.5.3"/>
    </reaction>
</comment>
<comment type="pathway">
    <text evidence="1">Purine metabolism; IMP biosynthesis via de novo pathway; 5-amino-1-(5-phospho-D-ribosyl)imidazole from N(2)-formyl-N(1)-(5-phospho-D-ribosyl)glycinamide: step 1/2.</text>
</comment>
<comment type="subunit">
    <text evidence="1">Monomer. Part of the FGAM synthase complex composed of 1 PurL, 1 PurQ and 2 PurS subunits.</text>
</comment>
<comment type="subcellular location">
    <subcellularLocation>
        <location evidence="1">Cytoplasm</location>
    </subcellularLocation>
</comment>
<comment type="similarity">
    <text evidence="1">Belongs to the FGAMS family.</text>
</comment>
<organism>
    <name type="scientific">Corynebacterium aurimucosum (strain ATCC 700975 / DSM 44827 / CIP 107346 / CN-1)</name>
    <name type="common">Corynebacterium nigricans</name>
    <dbReference type="NCBI Taxonomy" id="548476"/>
    <lineage>
        <taxon>Bacteria</taxon>
        <taxon>Bacillati</taxon>
        <taxon>Actinomycetota</taxon>
        <taxon>Actinomycetes</taxon>
        <taxon>Mycobacteriales</taxon>
        <taxon>Corynebacteriaceae</taxon>
        <taxon>Corynebacterium</taxon>
    </lineage>
</organism>
<sequence>MTVHNDTVEQAAAQPELEQPYRELGLKDDEYAHIREILGRRPTDAELTMYSVMWSEHCSYKSSKTHLRYFGETMTEEMGSKILAGIGENAGVVDIGDGNAVTFRVESHNHPSYVEPHQGAATGVGGIVRDIMAMGARPIAVMDQLRFGPADAPDTKRVLPGVVGGISHYGNCLGLPNIGGETVFDESYSGNPLVNALCVGTLKVDDLKLAFASGTGNKVMLFGSRTGLDGIGGVSVLASDTFEDGAERKLPAVQVGDPFAEKVLIECCLELYKSGIVVGIQDLGGAGLACATSELAAAGDGGMEINLDNVPLRAKDMTAAEILASESQERMCAVVTPENVEKFKEICAHWDVTCAEIGEVTTGKHLIIRHQGEVVVDAPAGTIADEAPVYDRPYARPEWQDALQEFKGVEKQDLTVALKKLVASPALCSRDFITEQYDRYVRGNTVQSHHANAGVLRIDEETGRGIAVSADASGRYTKLDPNMGTRLALAEAYRNVAVTGARPVAITNCLNYGSPENPDVMWQFRESVHGLADGAVELGIPVSGGNVSFYNQTGEEPILPTPVVGVLGVIDDVHKSIGNELGLVEEPEVLVLLGETKDEFGGSIWQQVSAREQGNESENGLNGLPPQVDLANEQRLADFFVGNEGVTAAHDLSEGGLAVTAFEMAKRSGVGLNLDLSKVHEDAFVAAFSESASRVLVATTADRVDMLLHRAEECGVPAVVIGQTTDNGELELGGESIAVSELREAWAATLPDLFGHAVGANSVVE</sequence>
<proteinExistence type="inferred from homology"/>
<dbReference type="EC" id="6.3.5.3" evidence="1"/>
<dbReference type="EMBL" id="CP001601">
    <property type="protein sequence ID" value="ACP33771.1"/>
    <property type="molecule type" value="Genomic_DNA"/>
</dbReference>
<dbReference type="RefSeq" id="WP_012715298.1">
    <property type="nucleotide sequence ID" value="NC_012590.1"/>
</dbReference>
<dbReference type="SMR" id="C3PIW7"/>
<dbReference type="STRING" id="548476.cauri_2178"/>
<dbReference type="GeneID" id="31924831"/>
<dbReference type="KEGG" id="car:cauri_2178"/>
<dbReference type="eggNOG" id="COG0046">
    <property type="taxonomic scope" value="Bacteria"/>
</dbReference>
<dbReference type="HOGENOM" id="CLU_003100_0_1_11"/>
<dbReference type="UniPathway" id="UPA00074">
    <property type="reaction ID" value="UER00128"/>
</dbReference>
<dbReference type="Proteomes" id="UP000002077">
    <property type="component" value="Chromosome"/>
</dbReference>
<dbReference type="GO" id="GO:0005737">
    <property type="term" value="C:cytoplasm"/>
    <property type="evidence" value="ECO:0007669"/>
    <property type="project" value="UniProtKB-SubCell"/>
</dbReference>
<dbReference type="GO" id="GO:0005524">
    <property type="term" value="F:ATP binding"/>
    <property type="evidence" value="ECO:0007669"/>
    <property type="project" value="UniProtKB-UniRule"/>
</dbReference>
<dbReference type="GO" id="GO:0000287">
    <property type="term" value="F:magnesium ion binding"/>
    <property type="evidence" value="ECO:0007669"/>
    <property type="project" value="UniProtKB-UniRule"/>
</dbReference>
<dbReference type="GO" id="GO:0004642">
    <property type="term" value="F:phosphoribosylformylglycinamidine synthase activity"/>
    <property type="evidence" value="ECO:0007669"/>
    <property type="project" value="UniProtKB-UniRule"/>
</dbReference>
<dbReference type="GO" id="GO:0006189">
    <property type="term" value="P:'de novo' IMP biosynthetic process"/>
    <property type="evidence" value="ECO:0007669"/>
    <property type="project" value="UniProtKB-UniRule"/>
</dbReference>
<dbReference type="CDD" id="cd02203">
    <property type="entry name" value="PurL_repeat1"/>
    <property type="match status" value="1"/>
</dbReference>
<dbReference type="CDD" id="cd02204">
    <property type="entry name" value="PurL_repeat2"/>
    <property type="match status" value="1"/>
</dbReference>
<dbReference type="FunFam" id="3.30.1330.10:FF:000004">
    <property type="entry name" value="Phosphoribosylformylglycinamidine synthase subunit PurL"/>
    <property type="match status" value="1"/>
</dbReference>
<dbReference type="Gene3D" id="3.90.650.10">
    <property type="entry name" value="PurM-like C-terminal domain"/>
    <property type="match status" value="2"/>
</dbReference>
<dbReference type="Gene3D" id="3.30.1330.10">
    <property type="entry name" value="PurM-like, N-terminal domain"/>
    <property type="match status" value="2"/>
</dbReference>
<dbReference type="HAMAP" id="MF_00420">
    <property type="entry name" value="PurL_2"/>
    <property type="match status" value="1"/>
</dbReference>
<dbReference type="InterPro" id="IPR010074">
    <property type="entry name" value="PRibForGlyAmidine_synth_PurL"/>
</dbReference>
<dbReference type="InterPro" id="IPR041609">
    <property type="entry name" value="PurL_linker"/>
</dbReference>
<dbReference type="InterPro" id="IPR010918">
    <property type="entry name" value="PurM-like_C_dom"/>
</dbReference>
<dbReference type="InterPro" id="IPR036676">
    <property type="entry name" value="PurM-like_C_sf"/>
</dbReference>
<dbReference type="InterPro" id="IPR016188">
    <property type="entry name" value="PurM-like_N"/>
</dbReference>
<dbReference type="InterPro" id="IPR036921">
    <property type="entry name" value="PurM-like_N_sf"/>
</dbReference>
<dbReference type="NCBIfam" id="TIGR01736">
    <property type="entry name" value="FGAM_synth_II"/>
    <property type="match status" value="1"/>
</dbReference>
<dbReference type="NCBIfam" id="NF002290">
    <property type="entry name" value="PRK01213.1"/>
    <property type="match status" value="1"/>
</dbReference>
<dbReference type="PANTHER" id="PTHR43555">
    <property type="entry name" value="PHOSPHORIBOSYLFORMYLGLYCINAMIDINE SYNTHASE SUBUNIT PURL"/>
    <property type="match status" value="1"/>
</dbReference>
<dbReference type="PANTHER" id="PTHR43555:SF1">
    <property type="entry name" value="PHOSPHORIBOSYLFORMYLGLYCINAMIDINE SYNTHASE SUBUNIT PURL"/>
    <property type="match status" value="1"/>
</dbReference>
<dbReference type="Pfam" id="PF00586">
    <property type="entry name" value="AIRS"/>
    <property type="match status" value="2"/>
</dbReference>
<dbReference type="Pfam" id="PF02769">
    <property type="entry name" value="AIRS_C"/>
    <property type="match status" value="2"/>
</dbReference>
<dbReference type="Pfam" id="PF18072">
    <property type="entry name" value="FGAR-AT_linker"/>
    <property type="match status" value="1"/>
</dbReference>
<dbReference type="PIRSF" id="PIRSF001587">
    <property type="entry name" value="FGAM_synthase_II"/>
    <property type="match status" value="1"/>
</dbReference>
<dbReference type="SUPFAM" id="SSF56042">
    <property type="entry name" value="PurM C-terminal domain-like"/>
    <property type="match status" value="2"/>
</dbReference>
<dbReference type="SUPFAM" id="SSF55326">
    <property type="entry name" value="PurM N-terminal domain-like"/>
    <property type="match status" value="2"/>
</dbReference>
<reference key="1">
    <citation type="journal article" date="2010" name="BMC Genomics">
        <title>Complete genome sequence and lifestyle of black-pigmented Corynebacterium aurimucosum ATCC 700975 (formerly C. nigricans CN-1) isolated from a vaginal swab of a woman with spontaneous abortion.</title>
        <authorList>
            <person name="Trost E."/>
            <person name="Gotker S."/>
            <person name="Schneider J."/>
            <person name="Schneiker-Bekel S."/>
            <person name="Szczepanowski R."/>
            <person name="Tilker A."/>
            <person name="Viehoever P."/>
            <person name="Arnold W."/>
            <person name="Bekel T."/>
            <person name="Blom J."/>
            <person name="Gartemann K.H."/>
            <person name="Linke B."/>
            <person name="Goesmann A."/>
            <person name="Puhler A."/>
            <person name="Shukla S.K."/>
            <person name="Tauch A."/>
        </authorList>
    </citation>
    <scope>NUCLEOTIDE SEQUENCE [LARGE SCALE GENOMIC DNA]</scope>
    <source>
        <strain>ATCC 700975 / DSM 44827 / CIP 107346 / CN-1</strain>
    </source>
</reference>
<accession>C3PIW7</accession>